<comment type="similarity">
    <text evidence="2">Belongs to the archaeal ATPase family.</text>
</comment>
<keyword id="KW-0002">3D-structure</keyword>
<keyword id="KW-0067">ATP-binding</keyword>
<keyword id="KW-0547">Nucleotide-binding</keyword>
<keyword id="KW-1185">Reference proteome</keyword>
<sequence length="377" mass="44463">MINMKFFNRVEEIKEILSILEEEPNLIYFIYGPINSGKTALINEIINNRLDKNKYVVFYIDLREIFISKYDEFEAKLRATKTFGFRLIIEVLFEEYEDDKKPIEIIRSLIKDAPSLCGIPTPKNTLEEILKKKTTKNVFKYITNILMDIKREGKQPIIIIDELQKIGDMKINGFLIYELFNYFVSLTKHKHLCHVFCLSSDSLFIERVYNEAMLKERVDYILVDDFDKETALKFIDFLSEEILNKKLSDEDKELIYSYVGGKPILIINVIGKLKHKNLKDVLNILLMDEISKLKDFLSNLDYIKPKVNIEEEIIEIRKEDIINALKLFKGKYEIEVDKIPKAVYVYLVKKNILFLYPQRGTLKPQSFLVWNAIKRVL</sequence>
<protein>
    <recommendedName>
        <fullName>Uncharacterized ATP-binding protein MJ1010</fullName>
    </recommendedName>
</protein>
<proteinExistence type="evidence at protein level"/>
<feature type="chain" id="PRO_0000184673" description="Uncharacterized ATP-binding protein MJ1010">
    <location>
        <begin position="1"/>
        <end position="377"/>
    </location>
</feature>
<feature type="binding site" evidence="1">
    <location>
        <begin position="32"/>
        <end position="39"/>
    </location>
    <ligand>
        <name>ATP</name>
        <dbReference type="ChEBI" id="CHEBI:30616"/>
    </ligand>
</feature>
<feature type="helix" evidence="3">
    <location>
        <begin position="278"/>
        <end position="298"/>
    </location>
</feature>
<feature type="turn" evidence="3">
    <location>
        <begin position="299"/>
        <end position="302"/>
    </location>
</feature>
<feature type="strand" evidence="3">
    <location>
        <begin position="306"/>
        <end position="309"/>
    </location>
</feature>
<feature type="strand" evidence="3">
    <location>
        <begin position="312"/>
        <end position="315"/>
    </location>
</feature>
<feature type="helix" evidence="3">
    <location>
        <begin position="318"/>
        <end position="326"/>
    </location>
</feature>
<feature type="helix" evidence="3">
    <location>
        <begin position="327"/>
        <end position="329"/>
    </location>
</feature>
<feature type="strand" evidence="3">
    <location>
        <begin position="332"/>
        <end position="335"/>
    </location>
</feature>
<feature type="helix" evidence="3">
    <location>
        <begin position="336"/>
        <end position="338"/>
    </location>
</feature>
<feature type="helix" evidence="3">
    <location>
        <begin position="341"/>
        <end position="349"/>
    </location>
</feature>
<feature type="strand" evidence="3">
    <location>
        <begin position="352"/>
        <end position="356"/>
    </location>
</feature>
<feature type="turn" evidence="3">
    <location>
        <begin position="357"/>
        <end position="360"/>
    </location>
</feature>
<feature type="strand" evidence="3">
    <location>
        <begin position="361"/>
        <end position="366"/>
    </location>
</feature>
<feature type="helix" evidence="3">
    <location>
        <begin position="367"/>
        <end position="376"/>
    </location>
</feature>
<accession>Q58416</accession>
<name>Y1010_METJA</name>
<reference key="1">
    <citation type="journal article" date="1996" name="Science">
        <title>Complete genome sequence of the methanogenic archaeon, Methanococcus jannaschii.</title>
        <authorList>
            <person name="Bult C.J."/>
            <person name="White O."/>
            <person name="Olsen G.J."/>
            <person name="Zhou L."/>
            <person name="Fleischmann R.D."/>
            <person name="Sutton G.G."/>
            <person name="Blake J.A."/>
            <person name="FitzGerald L.M."/>
            <person name="Clayton R.A."/>
            <person name="Gocayne J.D."/>
            <person name="Kerlavage A.R."/>
            <person name="Dougherty B.A."/>
            <person name="Tomb J.-F."/>
            <person name="Adams M.D."/>
            <person name="Reich C.I."/>
            <person name="Overbeek R."/>
            <person name="Kirkness E.F."/>
            <person name="Weinstock K.G."/>
            <person name="Merrick J.M."/>
            <person name="Glodek A."/>
            <person name="Scott J.L."/>
            <person name="Geoghagen N.S.M."/>
            <person name="Weidman J.F."/>
            <person name="Fuhrmann J.L."/>
            <person name="Nguyen D."/>
            <person name="Utterback T.R."/>
            <person name="Kelley J.M."/>
            <person name="Peterson J.D."/>
            <person name="Sadow P.W."/>
            <person name="Hanna M.C."/>
            <person name="Cotton M.D."/>
            <person name="Roberts K.M."/>
            <person name="Hurst M.A."/>
            <person name="Kaine B.P."/>
            <person name="Borodovsky M."/>
            <person name="Klenk H.-P."/>
            <person name="Fraser C.M."/>
            <person name="Smith H.O."/>
            <person name="Woese C.R."/>
            <person name="Venter J.C."/>
        </authorList>
    </citation>
    <scope>NUCLEOTIDE SEQUENCE [LARGE SCALE GENOMIC DNA]</scope>
    <source>
        <strain>ATCC 43067 / DSM 2661 / JAL-1 / JCM 10045 / NBRC 100440</strain>
    </source>
</reference>
<reference key="2">
    <citation type="journal article" date="1997" name="Science">
        <title>Evidence for a family of archaeal ATPases.</title>
        <authorList>
            <person name="Koonin E.V."/>
        </authorList>
    </citation>
    <scope>SIMILARITY</scope>
</reference>
<evidence type="ECO:0000255" key="1"/>
<evidence type="ECO:0000305" key="2"/>
<evidence type="ECO:0007829" key="3">
    <source>
        <dbReference type="PDB" id="3BJO"/>
    </source>
</evidence>
<organism>
    <name type="scientific">Methanocaldococcus jannaschii (strain ATCC 43067 / DSM 2661 / JAL-1 / JCM 10045 / NBRC 100440)</name>
    <name type="common">Methanococcus jannaschii</name>
    <dbReference type="NCBI Taxonomy" id="243232"/>
    <lineage>
        <taxon>Archaea</taxon>
        <taxon>Methanobacteriati</taxon>
        <taxon>Methanobacteriota</taxon>
        <taxon>Methanomada group</taxon>
        <taxon>Methanococci</taxon>
        <taxon>Methanococcales</taxon>
        <taxon>Methanocaldococcaceae</taxon>
        <taxon>Methanocaldococcus</taxon>
    </lineage>
</organism>
<dbReference type="EMBL" id="L77117">
    <property type="protein sequence ID" value="AAB99015.1"/>
    <property type="molecule type" value="Genomic_DNA"/>
</dbReference>
<dbReference type="PIR" id="A64426">
    <property type="entry name" value="A64426"/>
</dbReference>
<dbReference type="PDB" id="3BJO">
    <property type="method" value="X-ray"/>
    <property type="resolution" value="2.05 A"/>
    <property type="chains" value="A=278-377"/>
</dbReference>
<dbReference type="PDBsum" id="3BJO"/>
<dbReference type="SMR" id="Q58416"/>
<dbReference type="STRING" id="243232.MJ_1010"/>
<dbReference type="PaxDb" id="243232-MJ_1010"/>
<dbReference type="EnsemblBacteria" id="AAB99015">
    <property type="protein sequence ID" value="AAB99015"/>
    <property type="gene ID" value="MJ_1010"/>
</dbReference>
<dbReference type="KEGG" id="mja:MJ_1010"/>
<dbReference type="eggNOG" id="arCOG03407">
    <property type="taxonomic scope" value="Archaea"/>
</dbReference>
<dbReference type="HOGENOM" id="CLU_068608_0_0_2"/>
<dbReference type="InParanoid" id="Q58416"/>
<dbReference type="PhylomeDB" id="Q58416"/>
<dbReference type="EvolutionaryTrace" id="Q58416"/>
<dbReference type="Proteomes" id="UP000000805">
    <property type="component" value="Chromosome"/>
</dbReference>
<dbReference type="GO" id="GO:0005524">
    <property type="term" value="F:ATP binding"/>
    <property type="evidence" value="ECO:0007669"/>
    <property type="project" value="UniProtKB-KW"/>
</dbReference>
<dbReference type="GO" id="GO:0016887">
    <property type="term" value="F:ATP hydrolysis activity"/>
    <property type="evidence" value="ECO:0007669"/>
    <property type="project" value="InterPro"/>
</dbReference>
<dbReference type="CDD" id="cd00009">
    <property type="entry name" value="AAA"/>
    <property type="match status" value="1"/>
</dbReference>
<dbReference type="Gene3D" id="3.40.50.300">
    <property type="entry name" value="P-loop containing nucleotide triphosphate hydrolases"/>
    <property type="match status" value="1"/>
</dbReference>
<dbReference type="Gene3D" id="1.10.10.10">
    <property type="entry name" value="Winged helix-like DNA-binding domain superfamily/Winged helix DNA-binding domain"/>
    <property type="match status" value="1"/>
</dbReference>
<dbReference type="InterPro" id="IPR003593">
    <property type="entry name" value="AAA+_ATPase"/>
</dbReference>
<dbReference type="InterPro" id="IPR051667">
    <property type="entry name" value="Archaeal_ATPase_domain"/>
</dbReference>
<dbReference type="InterPro" id="IPR011579">
    <property type="entry name" value="ATPase_dom"/>
</dbReference>
<dbReference type="InterPro" id="IPR049081">
    <property type="entry name" value="MJ1010-like_2nd"/>
</dbReference>
<dbReference type="InterPro" id="IPR027417">
    <property type="entry name" value="P-loop_NTPase"/>
</dbReference>
<dbReference type="InterPro" id="IPR036388">
    <property type="entry name" value="WH-like_DNA-bd_sf"/>
</dbReference>
<dbReference type="PANTHER" id="PTHR37096:SF1">
    <property type="entry name" value="AAA+ ATPASE DOMAIN-CONTAINING PROTEIN"/>
    <property type="match status" value="1"/>
</dbReference>
<dbReference type="PANTHER" id="PTHR37096">
    <property type="entry name" value="YALI0E33429P"/>
    <property type="match status" value="1"/>
</dbReference>
<dbReference type="Pfam" id="PF01637">
    <property type="entry name" value="ATPase_2"/>
    <property type="match status" value="1"/>
</dbReference>
<dbReference type="Pfam" id="PF21690">
    <property type="entry name" value="MJ1010-like_2nd"/>
    <property type="match status" value="1"/>
</dbReference>
<dbReference type="SMART" id="SM00382">
    <property type="entry name" value="AAA"/>
    <property type="match status" value="1"/>
</dbReference>
<dbReference type="SUPFAM" id="SSF52540">
    <property type="entry name" value="P-loop containing nucleoside triphosphate hydrolases"/>
    <property type="match status" value="1"/>
</dbReference>
<gene>
    <name type="ordered locus">MJ1010</name>
</gene>